<reference key="1">
    <citation type="journal article" date="2009" name="J. Bacteriol.">
        <title>Role of conjugative elements in the evolution of the multidrug-resistant pandemic clone Streptococcus pneumoniae Spain23F ST81.</title>
        <authorList>
            <person name="Croucher N.J."/>
            <person name="Walker D."/>
            <person name="Romero P."/>
            <person name="Lennard N."/>
            <person name="Paterson G.K."/>
            <person name="Bason N.C."/>
            <person name="Mitchell A.M."/>
            <person name="Quail M.A."/>
            <person name="Andrew P.W."/>
            <person name="Parkhill J."/>
            <person name="Bentley S.D."/>
            <person name="Mitchell T.J."/>
        </authorList>
    </citation>
    <scope>NUCLEOTIDE SEQUENCE [LARGE SCALE GENOMIC DNA]</scope>
    <source>
        <strain>ATCC 700669 / Spain 23F-1</strain>
    </source>
</reference>
<keyword id="KW-0067">ATP-binding</keyword>
<keyword id="KW-0418">Kinase</keyword>
<keyword id="KW-0423">Lactose metabolism</keyword>
<keyword id="KW-0547">Nucleotide-binding</keyword>
<keyword id="KW-0808">Transferase</keyword>
<accession>B8ZQ64</accession>
<comment type="catalytic activity">
    <reaction evidence="1">
        <text>D-tagatofuranose 6-phosphate + ATP = D-tagatofuranose 1,6-bisphosphate + ADP + H(+)</text>
        <dbReference type="Rhea" id="RHEA:12420"/>
        <dbReference type="ChEBI" id="CHEBI:15378"/>
        <dbReference type="ChEBI" id="CHEBI:30616"/>
        <dbReference type="ChEBI" id="CHEBI:58694"/>
        <dbReference type="ChEBI" id="CHEBI:58695"/>
        <dbReference type="ChEBI" id="CHEBI:456216"/>
        <dbReference type="EC" id="2.7.1.144"/>
    </reaction>
</comment>
<comment type="pathway">
    <text evidence="1">Carbohydrate metabolism; D-tagatose 6-phosphate degradation; D-glyceraldehyde 3-phosphate and glycerone phosphate from D-tagatose 6-phosphate: step 1/2.</text>
</comment>
<comment type="similarity">
    <text evidence="1">Belongs to the carbohydrate kinase PfkB family. LacC subfamily.</text>
</comment>
<name>LACC_STRPJ</name>
<organism>
    <name type="scientific">Streptococcus pneumoniae (strain ATCC 700669 / Spain 23F-1)</name>
    <dbReference type="NCBI Taxonomy" id="561276"/>
    <lineage>
        <taxon>Bacteria</taxon>
        <taxon>Bacillati</taxon>
        <taxon>Bacillota</taxon>
        <taxon>Bacilli</taxon>
        <taxon>Lactobacillales</taxon>
        <taxon>Streptococcaceae</taxon>
        <taxon>Streptococcus</taxon>
    </lineage>
</organism>
<evidence type="ECO:0000255" key="1">
    <source>
        <dbReference type="HAMAP-Rule" id="MF_01557"/>
    </source>
</evidence>
<gene>
    <name evidence="1" type="primary">lacC</name>
    <name type="ordered locus">SPN23F10900</name>
</gene>
<dbReference type="EC" id="2.7.1.144" evidence="1"/>
<dbReference type="EMBL" id="FM211187">
    <property type="protein sequence ID" value="CAR68903.1"/>
    <property type="molecule type" value="Genomic_DNA"/>
</dbReference>
<dbReference type="RefSeq" id="WP_000604274.1">
    <property type="nucleotide sequence ID" value="NC_011900.1"/>
</dbReference>
<dbReference type="SMR" id="B8ZQ64"/>
<dbReference type="KEGG" id="sne:SPN23F10900"/>
<dbReference type="HOGENOM" id="CLU_050013_5_0_9"/>
<dbReference type="UniPathway" id="UPA00704">
    <property type="reaction ID" value="UER00715"/>
</dbReference>
<dbReference type="GO" id="GO:0005829">
    <property type="term" value="C:cytosol"/>
    <property type="evidence" value="ECO:0007669"/>
    <property type="project" value="TreeGrafter"/>
</dbReference>
<dbReference type="GO" id="GO:0005524">
    <property type="term" value="F:ATP binding"/>
    <property type="evidence" value="ECO:0007669"/>
    <property type="project" value="UniProtKB-KW"/>
</dbReference>
<dbReference type="GO" id="GO:0008443">
    <property type="term" value="F:phosphofructokinase activity"/>
    <property type="evidence" value="ECO:0007669"/>
    <property type="project" value="TreeGrafter"/>
</dbReference>
<dbReference type="GO" id="GO:0009024">
    <property type="term" value="F:tagatose-6-phosphate kinase activity"/>
    <property type="evidence" value="ECO:0007669"/>
    <property type="project" value="UniProtKB-UniRule"/>
</dbReference>
<dbReference type="GO" id="GO:2001059">
    <property type="term" value="P:D-tagatose 6-phosphate catabolic process"/>
    <property type="evidence" value="ECO:0007669"/>
    <property type="project" value="UniProtKB-UniRule"/>
</dbReference>
<dbReference type="GO" id="GO:0019512">
    <property type="term" value="P:lactose catabolic process via tagatose-6-phosphate"/>
    <property type="evidence" value="ECO:0007669"/>
    <property type="project" value="InterPro"/>
</dbReference>
<dbReference type="CDD" id="cd01164">
    <property type="entry name" value="FruK_PfkB_like"/>
    <property type="match status" value="1"/>
</dbReference>
<dbReference type="FunFam" id="3.40.1190.20:FF:000001">
    <property type="entry name" value="Phosphofructokinase"/>
    <property type="match status" value="1"/>
</dbReference>
<dbReference type="Gene3D" id="3.40.1190.20">
    <property type="match status" value="1"/>
</dbReference>
<dbReference type="HAMAP" id="MF_01557">
    <property type="entry name" value="LacC"/>
    <property type="match status" value="1"/>
</dbReference>
<dbReference type="InterPro" id="IPR002173">
    <property type="entry name" value="Carboh/pur_kinase_PfkB_CS"/>
</dbReference>
<dbReference type="InterPro" id="IPR005926">
    <property type="entry name" value="LacC"/>
</dbReference>
<dbReference type="InterPro" id="IPR011611">
    <property type="entry name" value="PfkB_dom"/>
</dbReference>
<dbReference type="InterPro" id="IPR029056">
    <property type="entry name" value="Ribokinase-like"/>
</dbReference>
<dbReference type="InterPro" id="IPR017583">
    <property type="entry name" value="Tagatose/fructose_Pkinase"/>
</dbReference>
<dbReference type="NCBIfam" id="TIGR03168">
    <property type="entry name" value="1-PFK"/>
    <property type="match status" value="1"/>
</dbReference>
<dbReference type="NCBIfam" id="TIGR01231">
    <property type="entry name" value="lacC"/>
    <property type="match status" value="1"/>
</dbReference>
<dbReference type="NCBIfam" id="NF010033">
    <property type="entry name" value="PRK13508.1"/>
    <property type="match status" value="1"/>
</dbReference>
<dbReference type="PANTHER" id="PTHR46566:SF5">
    <property type="entry name" value="1-PHOSPHOFRUCTOKINASE"/>
    <property type="match status" value="1"/>
</dbReference>
<dbReference type="PANTHER" id="PTHR46566">
    <property type="entry name" value="1-PHOSPHOFRUCTOKINASE-RELATED"/>
    <property type="match status" value="1"/>
</dbReference>
<dbReference type="Pfam" id="PF00294">
    <property type="entry name" value="PfkB"/>
    <property type="match status" value="1"/>
</dbReference>
<dbReference type="PIRSF" id="PIRSF000535">
    <property type="entry name" value="1PFK/6PFK/LacC"/>
    <property type="match status" value="1"/>
</dbReference>
<dbReference type="SUPFAM" id="SSF53613">
    <property type="entry name" value="Ribokinase-like"/>
    <property type="match status" value="1"/>
</dbReference>
<dbReference type="PROSITE" id="PS00583">
    <property type="entry name" value="PFKB_KINASES_1"/>
    <property type="match status" value="1"/>
</dbReference>
<dbReference type="PROSITE" id="PS00584">
    <property type="entry name" value="PFKB_KINASES_2"/>
    <property type="match status" value="1"/>
</dbReference>
<protein>
    <recommendedName>
        <fullName evidence="1">Tagatose-6-phosphate kinase</fullName>
        <ecNumber evidence="1">2.7.1.144</ecNumber>
    </recommendedName>
    <alternativeName>
        <fullName evidence="1">Phosphotagatokinase</fullName>
    </alternativeName>
</protein>
<feature type="chain" id="PRO_1000185409" description="Tagatose-6-phosphate kinase">
    <location>
        <begin position="1"/>
        <end position="309"/>
    </location>
</feature>
<proteinExistence type="inferred from homology"/>
<sequence length="309" mass="33416">MILTVTMNPSIDISYPLDELKIDTVNRVVDVTKTAGGKGLNVTRVLSEFGDSVLATGLVGGKLGEFLVEHIDNQVKKDFFSIQGETRNCIAILHGDNQTEVLEKGPEVLEQEGQDFLEHFKKLLESVEVVAISGSLPAGLPVDYYASLVELANQAGKPVVLDCSGAALQAVLESPHKPTVIKPNNEELSQLLGREVSEDLDELKEVLQEPLFAGIEWIIVSLGANGTFAKHGDTFYKVDIPRIQVVNPVGSGDSTVAGISSGLLHKESDAELLIKANVLGMLNTQEKMTGHVNMANYQALYDQLIVKEV</sequence>